<proteinExistence type="inferred from homology"/>
<organism>
    <name type="scientific">Shigella dysenteriae serotype 1 (strain Sd197)</name>
    <dbReference type="NCBI Taxonomy" id="300267"/>
    <lineage>
        <taxon>Bacteria</taxon>
        <taxon>Pseudomonadati</taxon>
        <taxon>Pseudomonadota</taxon>
        <taxon>Gammaproteobacteria</taxon>
        <taxon>Enterobacterales</taxon>
        <taxon>Enterobacteriaceae</taxon>
        <taxon>Shigella</taxon>
    </lineage>
</organism>
<feature type="chain" id="PRO_1000025728" description="Cell division protein FtsB">
    <location>
        <begin position="1"/>
        <end position="103"/>
    </location>
</feature>
<feature type="topological domain" description="Cytoplasmic" evidence="1">
    <location>
        <begin position="1"/>
        <end position="3"/>
    </location>
</feature>
<feature type="transmembrane region" description="Helical" evidence="1">
    <location>
        <begin position="4"/>
        <end position="21"/>
    </location>
</feature>
<feature type="topological domain" description="Periplasmic" evidence="1">
    <location>
        <begin position="22"/>
        <end position="103"/>
    </location>
</feature>
<feature type="coiled-coil region" evidence="1">
    <location>
        <begin position="31"/>
        <end position="71"/>
    </location>
</feature>
<keyword id="KW-0131">Cell cycle</keyword>
<keyword id="KW-0132">Cell division</keyword>
<keyword id="KW-0997">Cell inner membrane</keyword>
<keyword id="KW-1003">Cell membrane</keyword>
<keyword id="KW-0175">Coiled coil</keyword>
<keyword id="KW-0472">Membrane</keyword>
<keyword id="KW-1185">Reference proteome</keyword>
<keyword id="KW-0812">Transmembrane</keyword>
<keyword id="KW-1133">Transmembrane helix</keyword>
<name>FTSB_SHIDS</name>
<accession>Q32CI2</accession>
<evidence type="ECO:0000255" key="1">
    <source>
        <dbReference type="HAMAP-Rule" id="MF_00599"/>
    </source>
</evidence>
<dbReference type="EMBL" id="CP000034">
    <property type="protein sequence ID" value="ABB62973.1"/>
    <property type="molecule type" value="Genomic_DNA"/>
</dbReference>
<dbReference type="RefSeq" id="WP_000517476.1">
    <property type="nucleotide sequence ID" value="NC_007606.1"/>
</dbReference>
<dbReference type="RefSeq" id="YP_404464.1">
    <property type="nucleotide sequence ID" value="NC_007606.1"/>
</dbReference>
<dbReference type="SMR" id="Q32CI2"/>
<dbReference type="STRING" id="300267.SDY_2947"/>
<dbReference type="EnsemblBacteria" id="ABB62973">
    <property type="protein sequence ID" value="ABB62973"/>
    <property type="gene ID" value="SDY_2947"/>
</dbReference>
<dbReference type="GeneID" id="93779258"/>
<dbReference type="KEGG" id="sdy:SDY_2947"/>
<dbReference type="PATRIC" id="fig|300267.13.peg.3539"/>
<dbReference type="HOGENOM" id="CLU_134863_5_2_6"/>
<dbReference type="Proteomes" id="UP000002716">
    <property type="component" value="Chromosome"/>
</dbReference>
<dbReference type="GO" id="GO:0032153">
    <property type="term" value="C:cell division site"/>
    <property type="evidence" value="ECO:0007669"/>
    <property type="project" value="UniProtKB-UniRule"/>
</dbReference>
<dbReference type="GO" id="GO:0030428">
    <property type="term" value="C:cell septum"/>
    <property type="evidence" value="ECO:0007669"/>
    <property type="project" value="TreeGrafter"/>
</dbReference>
<dbReference type="GO" id="GO:0005886">
    <property type="term" value="C:plasma membrane"/>
    <property type="evidence" value="ECO:0007669"/>
    <property type="project" value="UniProtKB-SubCell"/>
</dbReference>
<dbReference type="GO" id="GO:0043093">
    <property type="term" value="P:FtsZ-dependent cytokinesis"/>
    <property type="evidence" value="ECO:0007669"/>
    <property type="project" value="UniProtKB-UniRule"/>
</dbReference>
<dbReference type="FunFam" id="1.20.5.400:FF:000001">
    <property type="entry name" value="Cell division protein FtsB"/>
    <property type="match status" value="1"/>
</dbReference>
<dbReference type="Gene3D" id="1.20.5.400">
    <property type="match status" value="1"/>
</dbReference>
<dbReference type="HAMAP" id="MF_00599">
    <property type="entry name" value="FtsB"/>
    <property type="match status" value="1"/>
</dbReference>
<dbReference type="InterPro" id="IPR023081">
    <property type="entry name" value="Cell_div_FtsB"/>
</dbReference>
<dbReference type="InterPro" id="IPR007060">
    <property type="entry name" value="FtsL/DivIC"/>
</dbReference>
<dbReference type="NCBIfam" id="NF002058">
    <property type="entry name" value="PRK00888.1"/>
    <property type="match status" value="1"/>
</dbReference>
<dbReference type="PANTHER" id="PTHR37485">
    <property type="entry name" value="CELL DIVISION PROTEIN FTSB"/>
    <property type="match status" value="1"/>
</dbReference>
<dbReference type="PANTHER" id="PTHR37485:SF1">
    <property type="entry name" value="CELL DIVISION PROTEIN FTSB"/>
    <property type="match status" value="1"/>
</dbReference>
<dbReference type="Pfam" id="PF04977">
    <property type="entry name" value="DivIC"/>
    <property type="match status" value="1"/>
</dbReference>
<protein>
    <recommendedName>
        <fullName evidence="1">Cell division protein FtsB</fullName>
    </recommendedName>
</protein>
<comment type="function">
    <text evidence="1">Essential cell division protein. May link together the upstream cell division proteins, which are predominantly cytoplasmic, with the downstream cell division proteins, which are predominantly periplasmic.</text>
</comment>
<comment type="subunit">
    <text evidence="1">Part of a complex composed of FtsB, FtsL and FtsQ.</text>
</comment>
<comment type="subcellular location">
    <subcellularLocation>
        <location evidence="1">Cell inner membrane</location>
        <topology evidence="1">Single-pass type II membrane protein</topology>
    </subcellularLocation>
    <text evidence="1">Localizes to the division septum.</text>
</comment>
<comment type="similarity">
    <text evidence="1">Belongs to the FtsB family.</text>
</comment>
<reference key="1">
    <citation type="journal article" date="2005" name="Nucleic Acids Res.">
        <title>Genome dynamics and diversity of Shigella species, the etiologic agents of bacillary dysentery.</title>
        <authorList>
            <person name="Yang F."/>
            <person name="Yang J."/>
            <person name="Zhang X."/>
            <person name="Chen L."/>
            <person name="Jiang Y."/>
            <person name="Yan Y."/>
            <person name="Tang X."/>
            <person name="Wang J."/>
            <person name="Xiong Z."/>
            <person name="Dong J."/>
            <person name="Xue Y."/>
            <person name="Zhu Y."/>
            <person name="Xu X."/>
            <person name="Sun L."/>
            <person name="Chen S."/>
            <person name="Nie H."/>
            <person name="Peng J."/>
            <person name="Xu J."/>
            <person name="Wang Y."/>
            <person name="Yuan Z."/>
            <person name="Wen Y."/>
            <person name="Yao Z."/>
            <person name="Shen Y."/>
            <person name="Qiang B."/>
            <person name="Hou Y."/>
            <person name="Yu J."/>
            <person name="Jin Q."/>
        </authorList>
    </citation>
    <scope>NUCLEOTIDE SEQUENCE [LARGE SCALE GENOMIC DNA]</scope>
    <source>
        <strain>Sd197</strain>
    </source>
</reference>
<gene>
    <name evidence="1" type="primary">ftsB</name>
    <name type="ordered locus">SDY_2947</name>
</gene>
<sequence length="103" mass="11622">MGKLTLLLLAILVWLQYSLWFGKNGIHDYTRVNDDVAAQQATNAKLKARNDQLFAEIDDLNGGQEALEERARNELSMTRPGETFYRLVPDASKRAQSAGQNNR</sequence>